<accession>A5N4R8</accession>
<proteinExistence type="inferred from homology"/>
<gene>
    <name evidence="1" type="primary">adk</name>
    <name type="ordered locus">CKL_0245</name>
</gene>
<sequence length="217" mass="24293">MKIILLGPPGAGKGTQAKFISEEYSIPHISTGDIFRKNISDKTPLGIEAKEYLDKGQLVPDEVTINIVKDRLSEDDCESGFLLDGFPRTVYQAEALDSFLNANDNKIDMVLLIDVPRELIFDRMTGRRICPSCGASYHVKFNPPKLKDKCDICNNDIIQRKDDTESTVKDRLDVYEKQTEPLINYYKKQGVISTIEGSGEINQVFQRAKSALGAVCK</sequence>
<name>KAD_CLOK5</name>
<organism>
    <name type="scientific">Clostridium kluyveri (strain ATCC 8527 / DSM 555 / NBRC 12016 / NCIMB 10680 / K1)</name>
    <dbReference type="NCBI Taxonomy" id="431943"/>
    <lineage>
        <taxon>Bacteria</taxon>
        <taxon>Bacillati</taxon>
        <taxon>Bacillota</taxon>
        <taxon>Clostridia</taxon>
        <taxon>Eubacteriales</taxon>
        <taxon>Clostridiaceae</taxon>
        <taxon>Clostridium</taxon>
    </lineage>
</organism>
<dbReference type="EC" id="2.7.4.3" evidence="1"/>
<dbReference type="EMBL" id="CP000673">
    <property type="protein sequence ID" value="EDK32299.1"/>
    <property type="molecule type" value="Genomic_DNA"/>
</dbReference>
<dbReference type="RefSeq" id="WP_011988824.1">
    <property type="nucleotide sequence ID" value="NC_009706.1"/>
</dbReference>
<dbReference type="SMR" id="A5N4R8"/>
<dbReference type="STRING" id="431943.CKL_0245"/>
<dbReference type="KEGG" id="ckl:CKL_0245"/>
<dbReference type="eggNOG" id="COG0563">
    <property type="taxonomic scope" value="Bacteria"/>
</dbReference>
<dbReference type="HOGENOM" id="CLU_032354_1_2_9"/>
<dbReference type="UniPathway" id="UPA00588">
    <property type="reaction ID" value="UER00649"/>
</dbReference>
<dbReference type="Proteomes" id="UP000002411">
    <property type="component" value="Chromosome"/>
</dbReference>
<dbReference type="GO" id="GO:0005737">
    <property type="term" value="C:cytoplasm"/>
    <property type="evidence" value="ECO:0007669"/>
    <property type="project" value="UniProtKB-SubCell"/>
</dbReference>
<dbReference type="GO" id="GO:0004017">
    <property type="term" value="F:adenylate kinase activity"/>
    <property type="evidence" value="ECO:0007669"/>
    <property type="project" value="UniProtKB-UniRule"/>
</dbReference>
<dbReference type="GO" id="GO:0005524">
    <property type="term" value="F:ATP binding"/>
    <property type="evidence" value="ECO:0007669"/>
    <property type="project" value="UniProtKB-UniRule"/>
</dbReference>
<dbReference type="GO" id="GO:0008270">
    <property type="term" value="F:zinc ion binding"/>
    <property type="evidence" value="ECO:0007669"/>
    <property type="project" value="UniProtKB-UniRule"/>
</dbReference>
<dbReference type="GO" id="GO:0044209">
    <property type="term" value="P:AMP salvage"/>
    <property type="evidence" value="ECO:0007669"/>
    <property type="project" value="UniProtKB-UniRule"/>
</dbReference>
<dbReference type="CDD" id="cd01428">
    <property type="entry name" value="ADK"/>
    <property type="match status" value="1"/>
</dbReference>
<dbReference type="FunFam" id="3.40.50.300:FF:000106">
    <property type="entry name" value="Adenylate kinase mitochondrial"/>
    <property type="match status" value="1"/>
</dbReference>
<dbReference type="Gene3D" id="3.40.50.300">
    <property type="entry name" value="P-loop containing nucleotide triphosphate hydrolases"/>
    <property type="match status" value="1"/>
</dbReference>
<dbReference type="HAMAP" id="MF_00235">
    <property type="entry name" value="Adenylate_kinase_Adk"/>
    <property type="match status" value="1"/>
</dbReference>
<dbReference type="InterPro" id="IPR006259">
    <property type="entry name" value="Adenyl_kin_sub"/>
</dbReference>
<dbReference type="InterPro" id="IPR000850">
    <property type="entry name" value="Adenylat/UMP-CMP_kin"/>
</dbReference>
<dbReference type="InterPro" id="IPR033690">
    <property type="entry name" value="Adenylat_kinase_CS"/>
</dbReference>
<dbReference type="InterPro" id="IPR007862">
    <property type="entry name" value="Adenylate_kinase_lid-dom"/>
</dbReference>
<dbReference type="InterPro" id="IPR027417">
    <property type="entry name" value="P-loop_NTPase"/>
</dbReference>
<dbReference type="NCBIfam" id="TIGR01351">
    <property type="entry name" value="adk"/>
    <property type="match status" value="1"/>
</dbReference>
<dbReference type="NCBIfam" id="NF001379">
    <property type="entry name" value="PRK00279.1-1"/>
    <property type="match status" value="1"/>
</dbReference>
<dbReference type="NCBIfam" id="NF001380">
    <property type="entry name" value="PRK00279.1-2"/>
    <property type="match status" value="1"/>
</dbReference>
<dbReference type="NCBIfam" id="NF001381">
    <property type="entry name" value="PRK00279.1-3"/>
    <property type="match status" value="1"/>
</dbReference>
<dbReference type="NCBIfam" id="NF011100">
    <property type="entry name" value="PRK14527.1"/>
    <property type="match status" value="1"/>
</dbReference>
<dbReference type="PANTHER" id="PTHR23359">
    <property type="entry name" value="NUCLEOTIDE KINASE"/>
    <property type="match status" value="1"/>
</dbReference>
<dbReference type="Pfam" id="PF00406">
    <property type="entry name" value="ADK"/>
    <property type="match status" value="1"/>
</dbReference>
<dbReference type="Pfam" id="PF05191">
    <property type="entry name" value="ADK_lid"/>
    <property type="match status" value="1"/>
</dbReference>
<dbReference type="PRINTS" id="PR00094">
    <property type="entry name" value="ADENYLTKNASE"/>
</dbReference>
<dbReference type="SUPFAM" id="SSF52540">
    <property type="entry name" value="P-loop containing nucleoside triphosphate hydrolases"/>
    <property type="match status" value="1"/>
</dbReference>
<dbReference type="PROSITE" id="PS00113">
    <property type="entry name" value="ADENYLATE_KINASE"/>
    <property type="match status" value="1"/>
</dbReference>
<comment type="function">
    <text evidence="1">Catalyzes the reversible transfer of the terminal phosphate group between ATP and AMP. Plays an important role in cellular energy homeostasis and in adenine nucleotide metabolism.</text>
</comment>
<comment type="catalytic activity">
    <reaction evidence="1">
        <text>AMP + ATP = 2 ADP</text>
        <dbReference type="Rhea" id="RHEA:12973"/>
        <dbReference type="ChEBI" id="CHEBI:30616"/>
        <dbReference type="ChEBI" id="CHEBI:456215"/>
        <dbReference type="ChEBI" id="CHEBI:456216"/>
        <dbReference type="EC" id="2.7.4.3"/>
    </reaction>
</comment>
<comment type="pathway">
    <text evidence="1">Purine metabolism; AMP biosynthesis via salvage pathway; AMP from ADP: step 1/1.</text>
</comment>
<comment type="subunit">
    <text evidence="1">Monomer.</text>
</comment>
<comment type="subcellular location">
    <subcellularLocation>
        <location evidence="1">Cytoplasm</location>
    </subcellularLocation>
</comment>
<comment type="domain">
    <text evidence="1">Consists of three domains, a large central CORE domain and two small peripheral domains, NMPbind and LID, which undergo movements during catalysis. The LID domain closes over the site of phosphoryl transfer upon ATP binding. Assembling and dissambling the active center during each catalytic cycle provides an effective means to prevent ATP hydrolysis. Some bacteria have evolved a zinc-coordinating structure that stabilizes the LID domain.</text>
</comment>
<comment type="similarity">
    <text evidence="1">Belongs to the adenylate kinase family.</text>
</comment>
<reference key="1">
    <citation type="journal article" date="2008" name="Proc. Natl. Acad. Sci. U.S.A.">
        <title>The genome of Clostridium kluyveri, a strict anaerobe with unique metabolic features.</title>
        <authorList>
            <person name="Seedorf H."/>
            <person name="Fricke W.F."/>
            <person name="Veith B."/>
            <person name="Brueggemann H."/>
            <person name="Liesegang H."/>
            <person name="Strittmatter A."/>
            <person name="Miethke M."/>
            <person name="Buckel W."/>
            <person name="Hinderberger J."/>
            <person name="Li F."/>
            <person name="Hagemeier C."/>
            <person name="Thauer R.K."/>
            <person name="Gottschalk G."/>
        </authorList>
    </citation>
    <scope>NUCLEOTIDE SEQUENCE [LARGE SCALE GENOMIC DNA]</scope>
    <source>
        <strain>ATCC 8527 / DSM 555 / NBRC 12016 / NCIMB 10680 / K1</strain>
    </source>
</reference>
<keyword id="KW-0067">ATP-binding</keyword>
<keyword id="KW-0963">Cytoplasm</keyword>
<keyword id="KW-0418">Kinase</keyword>
<keyword id="KW-0479">Metal-binding</keyword>
<keyword id="KW-0545">Nucleotide biosynthesis</keyword>
<keyword id="KW-0547">Nucleotide-binding</keyword>
<keyword id="KW-1185">Reference proteome</keyword>
<keyword id="KW-0808">Transferase</keyword>
<keyword id="KW-0862">Zinc</keyword>
<evidence type="ECO:0000255" key="1">
    <source>
        <dbReference type="HAMAP-Rule" id="MF_00235"/>
    </source>
</evidence>
<protein>
    <recommendedName>
        <fullName evidence="1">Adenylate kinase</fullName>
        <shortName evidence="1">AK</shortName>
        <ecNumber evidence="1">2.7.4.3</ecNumber>
    </recommendedName>
    <alternativeName>
        <fullName evidence="1">ATP-AMP transphosphorylase</fullName>
    </alternativeName>
    <alternativeName>
        <fullName evidence="1">ATP:AMP phosphotransferase</fullName>
    </alternativeName>
    <alternativeName>
        <fullName evidence="1">Adenylate monophosphate kinase</fullName>
    </alternativeName>
</protein>
<feature type="chain" id="PRO_1000078268" description="Adenylate kinase">
    <location>
        <begin position="1"/>
        <end position="217"/>
    </location>
</feature>
<feature type="region of interest" description="NMP" evidence="1">
    <location>
        <begin position="30"/>
        <end position="59"/>
    </location>
</feature>
<feature type="region of interest" description="LID" evidence="1">
    <location>
        <begin position="126"/>
        <end position="163"/>
    </location>
</feature>
<feature type="binding site" evidence="1">
    <location>
        <begin position="10"/>
        <end position="15"/>
    </location>
    <ligand>
        <name>ATP</name>
        <dbReference type="ChEBI" id="CHEBI:30616"/>
    </ligand>
</feature>
<feature type="binding site" evidence="1">
    <location>
        <position position="31"/>
    </location>
    <ligand>
        <name>AMP</name>
        <dbReference type="ChEBI" id="CHEBI:456215"/>
    </ligand>
</feature>
<feature type="binding site" evidence="1">
    <location>
        <position position="36"/>
    </location>
    <ligand>
        <name>AMP</name>
        <dbReference type="ChEBI" id="CHEBI:456215"/>
    </ligand>
</feature>
<feature type="binding site" evidence="1">
    <location>
        <begin position="57"/>
        <end position="59"/>
    </location>
    <ligand>
        <name>AMP</name>
        <dbReference type="ChEBI" id="CHEBI:456215"/>
    </ligand>
</feature>
<feature type="binding site" evidence="1">
    <location>
        <begin position="85"/>
        <end position="88"/>
    </location>
    <ligand>
        <name>AMP</name>
        <dbReference type="ChEBI" id="CHEBI:456215"/>
    </ligand>
</feature>
<feature type="binding site" evidence="1">
    <location>
        <position position="92"/>
    </location>
    <ligand>
        <name>AMP</name>
        <dbReference type="ChEBI" id="CHEBI:456215"/>
    </ligand>
</feature>
<feature type="binding site" evidence="1">
    <location>
        <position position="127"/>
    </location>
    <ligand>
        <name>ATP</name>
        <dbReference type="ChEBI" id="CHEBI:30616"/>
    </ligand>
</feature>
<feature type="binding site" evidence="1">
    <location>
        <position position="130"/>
    </location>
    <ligand>
        <name>Zn(2+)</name>
        <dbReference type="ChEBI" id="CHEBI:29105"/>
        <note>structural</note>
    </ligand>
</feature>
<feature type="binding site" evidence="1">
    <location>
        <position position="133"/>
    </location>
    <ligand>
        <name>Zn(2+)</name>
        <dbReference type="ChEBI" id="CHEBI:29105"/>
        <note>structural</note>
    </ligand>
</feature>
<feature type="binding site" evidence="1">
    <location>
        <begin position="136"/>
        <end position="137"/>
    </location>
    <ligand>
        <name>ATP</name>
        <dbReference type="ChEBI" id="CHEBI:30616"/>
    </ligand>
</feature>
<feature type="binding site" evidence="1">
    <location>
        <position position="150"/>
    </location>
    <ligand>
        <name>Zn(2+)</name>
        <dbReference type="ChEBI" id="CHEBI:29105"/>
        <note>structural</note>
    </ligand>
</feature>
<feature type="binding site" evidence="1">
    <location>
        <position position="153"/>
    </location>
    <ligand>
        <name>Zn(2+)</name>
        <dbReference type="ChEBI" id="CHEBI:29105"/>
        <note>structural</note>
    </ligand>
</feature>
<feature type="binding site" evidence="1">
    <location>
        <position position="160"/>
    </location>
    <ligand>
        <name>AMP</name>
        <dbReference type="ChEBI" id="CHEBI:456215"/>
    </ligand>
</feature>
<feature type="binding site" evidence="1">
    <location>
        <position position="171"/>
    </location>
    <ligand>
        <name>AMP</name>
        <dbReference type="ChEBI" id="CHEBI:456215"/>
    </ligand>
</feature>
<feature type="binding site" evidence="1">
    <location>
        <position position="199"/>
    </location>
    <ligand>
        <name>ATP</name>
        <dbReference type="ChEBI" id="CHEBI:30616"/>
    </ligand>
</feature>